<protein>
    <recommendedName>
        <fullName evidence="1">Chorismate synthase</fullName>
        <shortName evidence="1">CS</shortName>
        <ecNumber evidence="1">4.2.3.5</ecNumber>
    </recommendedName>
    <alternativeName>
        <fullName evidence="1">5-enolpyruvylshikimate-3-phosphate phospholyase</fullName>
    </alternativeName>
</protein>
<accession>Q0AZJ3</accession>
<dbReference type="EC" id="4.2.3.5" evidence="1"/>
<dbReference type="EMBL" id="CP000448">
    <property type="protein sequence ID" value="ABI67861.1"/>
    <property type="molecule type" value="Genomic_DNA"/>
</dbReference>
<dbReference type="RefSeq" id="WP_011639966.1">
    <property type="nucleotide sequence ID" value="NC_008346.1"/>
</dbReference>
<dbReference type="SMR" id="Q0AZJ3"/>
<dbReference type="STRING" id="335541.Swol_0527"/>
<dbReference type="KEGG" id="swo:Swol_0527"/>
<dbReference type="eggNOG" id="COG0082">
    <property type="taxonomic scope" value="Bacteria"/>
</dbReference>
<dbReference type="HOGENOM" id="CLU_034547_2_0_9"/>
<dbReference type="OrthoDB" id="9771806at2"/>
<dbReference type="UniPathway" id="UPA00053">
    <property type="reaction ID" value="UER00090"/>
</dbReference>
<dbReference type="Proteomes" id="UP000001968">
    <property type="component" value="Chromosome"/>
</dbReference>
<dbReference type="GO" id="GO:0005829">
    <property type="term" value="C:cytosol"/>
    <property type="evidence" value="ECO:0007669"/>
    <property type="project" value="TreeGrafter"/>
</dbReference>
<dbReference type="GO" id="GO:0004107">
    <property type="term" value="F:chorismate synthase activity"/>
    <property type="evidence" value="ECO:0007669"/>
    <property type="project" value="UniProtKB-UniRule"/>
</dbReference>
<dbReference type="GO" id="GO:0010181">
    <property type="term" value="F:FMN binding"/>
    <property type="evidence" value="ECO:0007669"/>
    <property type="project" value="TreeGrafter"/>
</dbReference>
<dbReference type="GO" id="GO:0008652">
    <property type="term" value="P:amino acid biosynthetic process"/>
    <property type="evidence" value="ECO:0007669"/>
    <property type="project" value="UniProtKB-KW"/>
</dbReference>
<dbReference type="GO" id="GO:0009073">
    <property type="term" value="P:aromatic amino acid family biosynthetic process"/>
    <property type="evidence" value="ECO:0007669"/>
    <property type="project" value="UniProtKB-KW"/>
</dbReference>
<dbReference type="GO" id="GO:0009423">
    <property type="term" value="P:chorismate biosynthetic process"/>
    <property type="evidence" value="ECO:0007669"/>
    <property type="project" value="UniProtKB-UniRule"/>
</dbReference>
<dbReference type="CDD" id="cd07304">
    <property type="entry name" value="Chorismate_synthase"/>
    <property type="match status" value="1"/>
</dbReference>
<dbReference type="FunFam" id="3.60.150.10:FF:000002">
    <property type="entry name" value="Chorismate synthase"/>
    <property type="match status" value="1"/>
</dbReference>
<dbReference type="Gene3D" id="3.60.150.10">
    <property type="entry name" value="Chorismate synthase AroC"/>
    <property type="match status" value="1"/>
</dbReference>
<dbReference type="HAMAP" id="MF_00300">
    <property type="entry name" value="Chorismate_synth"/>
    <property type="match status" value="1"/>
</dbReference>
<dbReference type="InterPro" id="IPR000453">
    <property type="entry name" value="Chorismate_synth"/>
</dbReference>
<dbReference type="InterPro" id="IPR035904">
    <property type="entry name" value="Chorismate_synth_AroC_sf"/>
</dbReference>
<dbReference type="InterPro" id="IPR020541">
    <property type="entry name" value="Chorismate_synthase_CS"/>
</dbReference>
<dbReference type="NCBIfam" id="TIGR00033">
    <property type="entry name" value="aroC"/>
    <property type="match status" value="1"/>
</dbReference>
<dbReference type="NCBIfam" id="NF003793">
    <property type="entry name" value="PRK05382.1"/>
    <property type="match status" value="1"/>
</dbReference>
<dbReference type="PANTHER" id="PTHR21085">
    <property type="entry name" value="CHORISMATE SYNTHASE"/>
    <property type="match status" value="1"/>
</dbReference>
<dbReference type="PANTHER" id="PTHR21085:SF0">
    <property type="entry name" value="CHORISMATE SYNTHASE"/>
    <property type="match status" value="1"/>
</dbReference>
<dbReference type="Pfam" id="PF01264">
    <property type="entry name" value="Chorismate_synt"/>
    <property type="match status" value="1"/>
</dbReference>
<dbReference type="PIRSF" id="PIRSF001456">
    <property type="entry name" value="Chorismate_synth"/>
    <property type="match status" value="1"/>
</dbReference>
<dbReference type="SUPFAM" id="SSF103263">
    <property type="entry name" value="Chorismate synthase, AroC"/>
    <property type="match status" value="1"/>
</dbReference>
<dbReference type="PROSITE" id="PS00788">
    <property type="entry name" value="CHORISMATE_SYNTHASE_2"/>
    <property type="match status" value="1"/>
</dbReference>
<organism>
    <name type="scientific">Syntrophomonas wolfei subsp. wolfei (strain DSM 2245B / Goettingen)</name>
    <dbReference type="NCBI Taxonomy" id="335541"/>
    <lineage>
        <taxon>Bacteria</taxon>
        <taxon>Bacillati</taxon>
        <taxon>Bacillota</taxon>
        <taxon>Clostridia</taxon>
        <taxon>Eubacteriales</taxon>
        <taxon>Syntrophomonadaceae</taxon>
        <taxon>Syntrophomonas</taxon>
    </lineage>
</organism>
<keyword id="KW-0028">Amino-acid biosynthesis</keyword>
<keyword id="KW-0057">Aromatic amino acid biosynthesis</keyword>
<keyword id="KW-0274">FAD</keyword>
<keyword id="KW-0285">Flavoprotein</keyword>
<keyword id="KW-0288">FMN</keyword>
<keyword id="KW-0456">Lyase</keyword>
<keyword id="KW-0521">NADP</keyword>
<keyword id="KW-1185">Reference proteome</keyword>
<sequence>MVLRFITSGESHGKGLIGIVEQMPAGVEIGEEDINRELQRRQKGYGRGGRMKIESDRVEIFSGIRNGYSLGTPISYLIRNQDFENWQEIMATGECKRHEEKIVNRPRPGHADLAGAMKYNQSDMRNILERASARETAARVAAGAMFKKLLESFNIRVYSQVKSIGPVQVKTWQVNEQNWQDLREKVDESPLHSVDTEKEPLMREAIDQARSKGESLGGSFEVGVIGVPPGLGSYISWESRLDSQICALLMSIPAIKAAEIGEGIANSAEPGSRVHDEIFYSEEGGLHRKSNRAGGIEGGISNGETVWARAYMKPIPTLYKPLTSVNTKLWQEEKADIERSDICAVPAAAIVGESMLAFAIARAFLEKFSGDSLDEIRKSYTTYQAYLKRVWKWEKI</sequence>
<name>AROC_SYNWW</name>
<evidence type="ECO:0000255" key="1">
    <source>
        <dbReference type="HAMAP-Rule" id="MF_00300"/>
    </source>
</evidence>
<reference key="1">
    <citation type="journal article" date="2010" name="Environ. Microbiol.">
        <title>The genome of Syntrophomonas wolfei: new insights into syntrophic metabolism and biohydrogen production.</title>
        <authorList>
            <person name="Sieber J.R."/>
            <person name="Sims D.R."/>
            <person name="Han C."/>
            <person name="Kim E."/>
            <person name="Lykidis A."/>
            <person name="Lapidus A.L."/>
            <person name="McDonnald E."/>
            <person name="Rohlin L."/>
            <person name="Culley D.E."/>
            <person name="Gunsalus R."/>
            <person name="McInerney M.J."/>
        </authorList>
    </citation>
    <scope>NUCLEOTIDE SEQUENCE [LARGE SCALE GENOMIC DNA]</scope>
    <source>
        <strain>DSM 2245B / Goettingen</strain>
    </source>
</reference>
<feature type="chain" id="PRO_1000071976" description="Chorismate synthase">
    <location>
        <begin position="1"/>
        <end position="396"/>
    </location>
</feature>
<feature type="binding site" evidence="1">
    <location>
        <position position="41"/>
    </location>
    <ligand>
        <name>NADP(+)</name>
        <dbReference type="ChEBI" id="CHEBI:58349"/>
    </ligand>
</feature>
<feature type="binding site" evidence="1">
    <location>
        <position position="47"/>
    </location>
    <ligand>
        <name>NADP(+)</name>
        <dbReference type="ChEBI" id="CHEBI:58349"/>
    </ligand>
</feature>
<feature type="binding site" evidence="1">
    <location>
        <begin position="130"/>
        <end position="132"/>
    </location>
    <ligand>
        <name>FMN</name>
        <dbReference type="ChEBI" id="CHEBI:58210"/>
    </ligand>
</feature>
<feature type="binding site" evidence="1">
    <location>
        <position position="298"/>
    </location>
    <ligand>
        <name>FMN</name>
        <dbReference type="ChEBI" id="CHEBI:58210"/>
    </ligand>
</feature>
<feature type="binding site" evidence="1">
    <location>
        <begin position="313"/>
        <end position="317"/>
    </location>
    <ligand>
        <name>FMN</name>
        <dbReference type="ChEBI" id="CHEBI:58210"/>
    </ligand>
</feature>
<feature type="binding site" evidence="1">
    <location>
        <position position="339"/>
    </location>
    <ligand>
        <name>FMN</name>
        <dbReference type="ChEBI" id="CHEBI:58210"/>
    </ligand>
</feature>
<proteinExistence type="inferred from homology"/>
<gene>
    <name evidence="1" type="primary">aroC</name>
    <name type="ordered locus">Swol_0527</name>
</gene>
<comment type="function">
    <text evidence="1">Catalyzes the anti-1,4-elimination of the C-3 phosphate and the C-6 proR hydrogen from 5-enolpyruvylshikimate-3-phosphate (EPSP) to yield chorismate, which is the branch point compound that serves as the starting substrate for the three terminal pathways of aromatic amino acid biosynthesis. This reaction introduces a second double bond into the aromatic ring system.</text>
</comment>
<comment type="catalytic activity">
    <reaction evidence="1">
        <text>5-O-(1-carboxyvinyl)-3-phosphoshikimate = chorismate + phosphate</text>
        <dbReference type="Rhea" id="RHEA:21020"/>
        <dbReference type="ChEBI" id="CHEBI:29748"/>
        <dbReference type="ChEBI" id="CHEBI:43474"/>
        <dbReference type="ChEBI" id="CHEBI:57701"/>
        <dbReference type="EC" id="4.2.3.5"/>
    </reaction>
</comment>
<comment type="cofactor">
    <cofactor evidence="1">
        <name>FMNH2</name>
        <dbReference type="ChEBI" id="CHEBI:57618"/>
    </cofactor>
    <text evidence="1">Reduced FMN (FMNH(2)).</text>
</comment>
<comment type="pathway">
    <text evidence="1">Metabolic intermediate biosynthesis; chorismate biosynthesis; chorismate from D-erythrose 4-phosphate and phosphoenolpyruvate: step 7/7.</text>
</comment>
<comment type="subunit">
    <text evidence="1">Homotetramer.</text>
</comment>
<comment type="similarity">
    <text evidence="1">Belongs to the chorismate synthase family.</text>
</comment>